<organism>
    <name type="scientific">Arabidopsis thaliana</name>
    <name type="common">Mouse-ear cress</name>
    <dbReference type="NCBI Taxonomy" id="3702"/>
    <lineage>
        <taxon>Eukaryota</taxon>
        <taxon>Viridiplantae</taxon>
        <taxon>Streptophyta</taxon>
        <taxon>Embryophyta</taxon>
        <taxon>Tracheophyta</taxon>
        <taxon>Spermatophyta</taxon>
        <taxon>Magnoliopsida</taxon>
        <taxon>eudicotyledons</taxon>
        <taxon>Gunneridae</taxon>
        <taxon>Pentapetalae</taxon>
        <taxon>rosids</taxon>
        <taxon>malvids</taxon>
        <taxon>Brassicales</taxon>
        <taxon>Brassicaceae</taxon>
        <taxon>Camelineae</taxon>
        <taxon>Arabidopsis</taxon>
    </lineage>
</organism>
<evidence type="ECO:0000250" key="1">
    <source>
        <dbReference type="UniProtKB" id="P22259"/>
    </source>
</evidence>
<evidence type="ECO:0000250" key="2">
    <source>
        <dbReference type="UniProtKB" id="Q5SLL5"/>
    </source>
</evidence>
<evidence type="ECO:0000255" key="3">
    <source>
        <dbReference type="PROSITE-ProRule" id="PRU00499"/>
    </source>
</evidence>
<evidence type="ECO:0000256" key="4">
    <source>
        <dbReference type="SAM" id="MobiDB-lite"/>
    </source>
</evidence>
<evidence type="ECO:0000269" key="5">
    <source>
    </source>
</evidence>
<evidence type="ECO:0000269" key="6">
    <source>
    </source>
</evidence>
<evidence type="ECO:0000303" key="7">
    <source>
    </source>
</evidence>
<evidence type="ECO:0000303" key="8">
    <source>
    </source>
</evidence>
<evidence type="ECO:0000305" key="9"/>
<evidence type="ECO:0000312" key="10">
    <source>
        <dbReference type="Araport" id="AT4G37870"/>
    </source>
</evidence>
<evidence type="ECO:0000312" key="11">
    <source>
        <dbReference type="EMBL" id="CAB38935.1"/>
    </source>
</evidence>
<evidence type="ECO:0007744" key="12">
    <source>
    </source>
</evidence>
<evidence type="ECO:0007744" key="13">
    <source>
    </source>
</evidence>
<evidence type="ECO:0007744" key="14">
    <source>
    </source>
</evidence>
<keyword id="KW-0007">Acetylation</keyword>
<keyword id="KW-0067">ATP-binding</keyword>
<keyword id="KW-0106">Calcium</keyword>
<keyword id="KW-0963">Cytoplasm</keyword>
<keyword id="KW-0210">Decarboxylase</keyword>
<keyword id="KW-0312">Gluconeogenesis</keyword>
<keyword id="KW-0456">Lyase</keyword>
<keyword id="KW-0464">Manganese</keyword>
<keyword id="KW-0479">Metal-binding</keyword>
<keyword id="KW-0547">Nucleotide-binding</keyword>
<keyword id="KW-0597">Phosphoprotein</keyword>
<keyword id="KW-1185">Reference proteome</keyword>
<accession>Q9T074</accession>
<name>PCKA1_ARATH</name>
<reference key="1">
    <citation type="journal article" date="1999" name="Nature">
        <title>Sequence and analysis of chromosome 4 of the plant Arabidopsis thaliana.</title>
        <authorList>
            <person name="Mayer K.F.X."/>
            <person name="Schueller C."/>
            <person name="Wambutt R."/>
            <person name="Murphy G."/>
            <person name="Volckaert G."/>
            <person name="Pohl T."/>
            <person name="Duesterhoeft A."/>
            <person name="Stiekema W."/>
            <person name="Entian K.-D."/>
            <person name="Terryn N."/>
            <person name="Harris B."/>
            <person name="Ansorge W."/>
            <person name="Brandt P."/>
            <person name="Grivell L.A."/>
            <person name="Rieger M."/>
            <person name="Weichselgartner M."/>
            <person name="de Simone V."/>
            <person name="Obermaier B."/>
            <person name="Mache R."/>
            <person name="Mueller M."/>
            <person name="Kreis M."/>
            <person name="Delseny M."/>
            <person name="Puigdomenech P."/>
            <person name="Watson M."/>
            <person name="Schmidtheini T."/>
            <person name="Reichert B."/>
            <person name="Portetelle D."/>
            <person name="Perez-Alonso M."/>
            <person name="Boutry M."/>
            <person name="Bancroft I."/>
            <person name="Vos P."/>
            <person name="Hoheisel J."/>
            <person name="Zimmermann W."/>
            <person name="Wedler H."/>
            <person name="Ridley P."/>
            <person name="Langham S.-A."/>
            <person name="McCullagh B."/>
            <person name="Bilham L."/>
            <person name="Robben J."/>
            <person name="van der Schueren J."/>
            <person name="Grymonprez B."/>
            <person name="Chuang Y.-J."/>
            <person name="Vandenbussche F."/>
            <person name="Braeken M."/>
            <person name="Weltjens I."/>
            <person name="Voet M."/>
            <person name="Bastiaens I."/>
            <person name="Aert R."/>
            <person name="Defoor E."/>
            <person name="Weitzenegger T."/>
            <person name="Bothe G."/>
            <person name="Ramsperger U."/>
            <person name="Hilbert H."/>
            <person name="Braun M."/>
            <person name="Holzer E."/>
            <person name="Brandt A."/>
            <person name="Peters S."/>
            <person name="van Staveren M."/>
            <person name="Dirkse W."/>
            <person name="Mooijman P."/>
            <person name="Klein Lankhorst R."/>
            <person name="Rose M."/>
            <person name="Hauf J."/>
            <person name="Koetter P."/>
            <person name="Berneiser S."/>
            <person name="Hempel S."/>
            <person name="Feldpausch M."/>
            <person name="Lamberth S."/>
            <person name="Van den Daele H."/>
            <person name="De Keyser A."/>
            <person name="Buysshaert C."/>
            <person name="Gielen J."/>
            <person name="Villarroel R."/>
            <person name="De Clercq R."/>
            <person name="van Montagu M."/>
            <person name="Rogers J."/>
            <person name="Cronin A."/>
            <person name="Quail M.A."/>
            <person name="Bray-Allen S."/>
            <person name="Clark L."/>
            <person name="Doggett J."/>
            <person name="Hall S."/>
            <person name="Kay M."/>
            <person name="Lennard N."/>
            <person name="McLay K."/>
            <person name="Mayes R."/>
            <person name="Pettett A."/>
            <person name="Rajandream M.A."/>
            <person name="Lyne M."/>
            <person name="Benes V."/>
            <person name="Rechmann S."/>
            <person name="Borkova D."/>
            <person name="Bloecker H."/>
            <person name="Scharfe M."/>
            <person name="Grimm M."/>
            <person name="Loehnert T.-H."/>
            <person name="Dose S."/>
            <person name="de Haan M."/>
            <person name="Maarse A.C."/>
            <person name="Schaefer M."/>
            <person name="Mueller-Auer S."/>
            <person name="Gabel C."/>
            <person name="Fuchs M."/>
            <person name="Fartmann B."/>
            <person name="Granderath K."/>
            <person name="Dauner D."/>
            <person name="Herzl A."/>
            <person name="Neumann S."/>
            <person name="Argiriou A."/>
            <person name="Vitale D."/>
            <person name="Liguori R."/>
            <person name="Piravandi E."/>
            <person name="Massenet O."/>
            <person name="Quigley F."/>
            <person name="Clabauld G."/>
            <person name="Muendlein A."/>
            <person name="Felber R."/>
            <person name="Schnabl S."/>
            <person name="Hiller R."/>
            <person name="Schmidt W."/>
            <person name="Lecharny A."/>
            <person name="Aubourg S."/>
            <person name="Chefdor F."/>
            <person name="Cooke R."/>
            <person name="Berger C."/>
            <person name="Monfort A."/>
            <person name="Casacuberta E."/>
            <person name="Gibbons T."/>
            <person name="Weber N."/>
            <person name="Vandenbol M."/>
            <person name="Bargues M."/>
            <person name="Terol J."/>
            <person name="Torres A."/>
            <person name="Perez-Perez A."/>
            <person name="Purnelle B."/>
            <person name="Bent E."/>
            <person name="Johnson S."/>
            <person name="Tacon D."/>
            <person name="Jesse T."/>
            <person name="Heijnen L."/>
            <person name="Schwarz S."/>
            <person name="Scholler P."/>
            <person name="Heber S."/>
            <person name="Francs P."/>
            <person name="Bielke C."/>
            <person name="Frishman D."/>
            <person name="Haase D."/>
            <person name="Lemcke K."/>
            <person name="Mewes H.-W."/>
            <person name="Stocker S."/>
            <person name="Zaccaria P."/>
            <person name="Bevan M."/>
            <person name="Wilson R.K."/>
            <person name="de la Bastide M."/>
            <person name="Habermann K."/>
            <person name="Parnell L."/>
            <person name="Dedhia N."/>
            <person name="Gnoj L."/>
            <person name="Schutz K."/>
            <person name="Huang E."/>
            <person name="Spiegel L."/>
            <person name="Sekhon M."/>
            <person name="Murray J."/>
            <person name="Sheet P."/>
            <person name="Cordes M."/>
            <person name="Abu-Threideh J."/>
            <person name="Stoneking T."/>
            <person name="Kalicki J."/>
            <person name="Graves T."/>
            <person name="Harmon G."/>
            <person name="Edwards J."/>
            <person name="Latreille P."/>
            <person name="Courtney L."/>
            <person name="Cloud J."/>
            <person name="Abbott A."/>
            <person name="Scott K."/>
            <person name="Johnson D."/>
            <person name="Minx P."/>
            <person name="Bentley D."/>
            <person name="Fulton B."/>
            <person name="Miller N."/>
            <person name="Greco T."/>
            <person name="Kemp K."/>
            <person name="Kramer J."/>
            <person name="Fulton L."/>
            <person name="Mardis E."/>
            <person name="Dante M."/>
            <person name="Pepin K."/>
            <person name="Hillier L.W."/>
            <person name="Nelson J."/>
            <person name="Spieth J."/>
            <person name="Ryan E."/>
            <person name="Andrews S."/>
            <person name="Geisel C."/>
            <person name="Layman D."/>
            <person name="Du H."/>
            <person name="Ali J."/>
            <person name="Berghoff A."/>
            <person name="Jones K."/>
            <person name="Drone K."/>
            <person name="Cotton M."/>
            <person name="Joshu C."/>
            <person name="Antonoiu B."/>
            <person name="Zidanic M."/>
            <person name="Strong C."/>
            <person name="Sun H."/>
            <person name="Lamar B."/>
            <person name="Yordan C."/>
            <person name="Ma P."/>
            <person name="Zhong J."/>
            <person name="Preston R."/>
            <person name="Vil D."/>
            <person name="Shekher M."/>
            <person name="Matero A."/>
            <person name="Shah R."/>
            <person name="Swaby I.K."/>
            <person name="O'Shaughnessy A."/>
            <person name="Rodriguez M."/>
            <person name="Hoffman J."/>
            <person name="Till S."/>
            <person name="Granat S."/>
            <person name="Shohdy N."/>
            <person name="Hasegawa A."/>
            <person name="Hameed A."/>
            <person name="Lodhi M."/>
            <person name="Johnson A."/>
            <person name="Chen E."/>
            <person name="Marra M.A."/>
            <person name="Martienssen R."/>
            <person name="McCombie W.R."/>
        </authorList>
    </citation>
    <scope>NUCLEOTIDE SEQUENCE [LARGE SCALE GENOMIC DNA]</scope>
    <source>
        <strain>cv. Columbia</strain>
    </source>
</reference>
<reference key="2">
    <citation type="journal article" date="2017" name="Plant J.">
        <title>Araport11: a complete reannotation of the Arabidopsis thaliana reference genome.</title>
        <authorList>
            <person name="Cheng C.Y."/>
            <person name="Krishnakumar V."/>
            <person name="Chan A.P."/>
            <person name="Thibaud-Nissen F."/>
            <person name="Schobel S."/>
            <person name="Town C.D."/>
        </authorList>
    </citation>
    <scope>GENOME REANNOTATION</scope>
    <source>
        <strain>cv. Columbia</strain>
    </source>
</reference>
<reference key="3">
    <citation type="journal article" date="2003" name="Science">
        <title>Empirical analysis of transcriptional activity in the Arabidopsis genome.</title>
        <authorList>
            <person name="Yamada K."/>
            <person name="Lim J."/>
            <person name="Dale J.M."/>
            <person name="Chen H."/>
            <person name="Shinn P."/>
            <person name="Palm C.J."/>
            <person name="Southwick A.M."/>
            <person name="Wu H.C."/>
            <person name="Kim C.J."/>
            <person name="Nguyen M."/>
            <person name="Pham P.K."/>
            <person name="Cheuk R.F."/>
            <person name="Karlin-Newmann G."/>
            <person name="Liu S.X."/>
            <person name="Lam B."/>
            <person name="Sakano H."/>
            <person name="Wu T."/>
            <person name="Yu G."/>
            <person name="Miranda M."/>
            <person name="Quach H.L."/>
            <person name="Tripp M."/>
            <person name="Chang C.H."/>
            <person name="Lee J.M."/>
            <person name="Toriumi M.J."/>
            <person name="Chan M.M."/>
            <person name="Tang C.C."/>
            <person name="Onodera C.S."/>
            <person name="Deng J.M."/>
            <person name="Akiyama K."/>
            <person name="Ansari Y."/>
            <person name="Arakawa T."/>
            <person name="Banh J."/>
            <person name="Banno F."/>
            <person name="Bowser L."/>
            <person name="Brooks S.Y."/>
            <person name="Carninci P."/>
            <person name="Chao Q."/>
            <person name="Choy N."/>
            <person name="Enju A."/>
            <person name="Goldsmith A.D."/>
            <person name="Gurjal M."/>
            <person name="Hansen N.F."/>
            <person name="Hayashizaki Y."/>
            <person name="Johnson-Hopson C."/>
            <person name="Hsuan V.W."/>
            <person name="Iida K."/>
            <person name="Karnes M."/>
            <person name="Khan S."/>
            <person name="Koesema E."/>
            <person name="Ishida J."/>
            <person name="Jiang P.X."/>
            <person name="Jones T."/>
            <person name="Kawai J."/>
            <person name="Kamiya A."/>
            <person name="Meyers C."/>
            <person name="Nakajima M."/>
            <person name="Narusaka M."/>
            <person name="Seki M."/>
            <person name="Sakurai T."/>
            <person name="Satou M."/>
            <person name="Tamse R."/>
            <person name="Vaysberg M."/>
            <person name="Wallender E.K."/>
            <person name="Wong C."/>
            <person name="Yamamura Y."/>
            <person name="Yuan S."/>
            <person name="Shinozaki K."/>
            <person name="Davis R.W."/>
            <person name="Theologis A."/>
            <person name="Ecker J.R."/>
        </authorList>
    </citation>
    <scope>NUCLEOTIDE SEQUENCE [LARGE SCALE MRNA]</scope>
    <source>
        <strain>cv. Columbia</strain>
    </source>
</reference>
<reference key="4">
    <citation type="journal article" date="2007" name="Mol. Cell. Proteomics">
        <title>Multidimensional protein identification technology (MudPIT) analysis of ubiquitinated proteins in plants.</title>
        <authorList>
            <person name="Maor R."/>
            <person name="Jones A."/>
            <person name="Nuehse T.S."/>
            <person name="Studholme D.J."/>
            <person name="Peck S.C."/>
            <person name="Shirasu K."/>
        </authorList>
    </citation>
    <scope>IDENTIFICATION BY MASS SPECTROMETRY [LARGE SCALE ANALYSIS]</scope>
    <source>
        <strain>cv. Landsberg erecta</strain>
    </source>
</reference>
<reference key="5">
    <citation type="journal article" date="2007" name="Plant Cell Physiol.">
        <title>Phosphoenolpyruvate carboxykinase in Arabidopsis: changes in gene expression, protein and activity during vegetative and reproductive development.</title>
        <authorList>
            <person name="Malone S."/>
            <person name="Chen Z.-H."/>
            <person name="Bahrami A.R."/>
            <person name="Walker R.P."/>
            <person name="Gray J.E."/>
            <person name="Leegood R.C."/>
        </authorList>
    </citation>
    <scope>TISSUE SPECIFICITY</scope>
    <scope>DEVELOPMENTAL STAGE</scope>
    <scope>GENE FAMILY</scope>
    <scope>NOMENCLATURE</scope>
    <source>
        <strain>cv. Columbia</strain>
    </source>
</reference>
<reference key="6">
    <citation type="journal article" date="2008" name="J. Proteome Res.">
        <title>Site-specific phosphorylation profiling of Arabidopsis proteins by mass spectrometry and peptide chip analysis.</title>
        <authorList>
            <person name="de la Fuente van Bentem S."/>
            <person name="Anrather D."/>
            <person name="Dohnal I."/>
            <person name="Roitinger E."/>
            <person name="Csaszar E."/>
            <person name="Joore J."/>
            <person name="Buijnink J."/>
            <person name="Carreri A."/>
            <person name="Forzani C."/>
            <person name="Lorkovic Z.J."/>
            <person name="Barta A."/>
            <person name="Lecourieux D."/>
            <person name="Verhounig A."/>
            <person name="Jonak C."/>
            <person name="Hirt H."/>
        </authorList>
    </citation>
    <scope>PHOSPHORYLATION [LARGE SCALE ANALYSIS] AT SER-62 AND THR-66</scope>
    <scope>IDENTIFICATION BY MASS SPECTROMETRY [LARGE SCALE ANALYSIS]</scope>
    <source>
        <tissue>Root</tissue>
    </source>
</reference>
<reference key="7">
    <citation type="journal article" date="2009" name="J. Proteomics">
        <title>Phosphoproteomic analysis of nuclei-enriched fractions from Arabidopsis thaliana.</title>
        <authorList>
            <person name="Jones A.M.E."/>
            <person name="MacLean D."/>
            <person name="Studholme D.J."/>
            <person name="Serna-Sanz A."/>
            <person name="Andreasson E."/>
            <person name="Rathjen J.P."/>
            <person name="Peck S.C."/>
        </authorList>
    </citation>
    <scope>PHOSPHORYLATION [LARGE SCALE ANALYSIS] AT SER-62</scope>
    <scope>IDENTIFICATION BY MASS SPECTROMETRY [LARGE SCALE ANALYSIS]</scope>
    <source>
        <strain>cv. Columbia</strain>
    </source>
</reference>
<reference key="8">
    <citation type="journal article" date="2009" name="Plant Physiol.">
        <title>Large-scale Arabidopsis phosphoproteome profiling reveals novel chloroplast kinase substrates and phosphorylation networks.</title>
        <authorList>
            <person name="Reiland S."/>
            <person name="Messerli G."/>
            <person name="Baerenfaller K."/>
            <person name="Gerrits B."/>
            <person name="Endler A."/>
            <person name="Grossmann J."/>
            <person name="Gruissem W."/>
            <person name="Baginsky S."/>
        </authorList>
    </citation>
    <scope>IDENTIFICATION BY MASS SPECTROMETRY [LARGE SCALE ANALYSIS]</scope>
</reference>
<reference key="9">
    <citation type="journal article" date="2010" name="Plant J.">
        <title>C acid decarboxylases required for C photosynthesis are active in the mid-vein of the C species Arabidopsis thaliana, and are important in sugar and amino acid metabolism.</title>
        <authorList>
            <person name="Brown N.J."/>
            <person name="Palmer B.G."/>
            <person name="Stanley S."/>
            <person name="Hajaji H."/>
            <person name="Janacek S.H."/>
            <person name="Astley H.M."/>
            <person name="Parsley K."/>
            <person name="Kajala K."/>
            <person name="Quick W.P."/>
            <person name="Trenkamp S."/>
            <person name="Fernie A.R."/>
            <person name="Maurino V.G."/>
            <person name="Hibberd J.M."/>
        </authorList>
    </citation>
    <scope>FUNCTION</scope>
    <scope>DISRUPTION PHENOTYPE</scope>
    <scope>CATALYTIC ACTIVITY</scope>
    <scope>TISSUE SPECIFICITY</scope>
    <scope>DEVELOPMENTAL STAGE</scope>
    <scope>SUBCELLULAR LOCATION</scope>
    <source>
        <strain>cv. Columbia</strain>
    </source>
</reference>
<reference key="10">
    <citation type="journal article" date="2012" name="Mol. Cell. Proteomics">
        <title>Comparative large-scale characterisation of plant vs. mammal proteins reveals similar and idiosyncratic N-alpha acetylation features.</title>
        <authorList>
            <person name="Bienvenut W.V."/>
            <person name="Sumpton D."/>
            <person name="Martinez A."/>
            <person name="Lilla S."/>
            <person name="Espagne C."/>
            <person name="Meinnel T."/>
            <person name="Giglione C."/>
        </authorList>
    </citation>
    <scope>ACETYLATION [LARGE SCALE ANALYSIS] AT SER-2</scope>
    <scope>CLEAVAGE OF INITIATOR METHIONINE [LARGE SCALE ANALYSIS]</scope>
    <scope>IDENTIFICATION BY MASS SPECTROMETRY [LARGE SCALE ANALYSIS]</scope>
</reference>
<comment type="function">
    <text evidence="6">Involved in the gluconeogenesis (PubMed:19807880). Catalyzes the conversion of oxaloacetate (OAA) to phosphoenolpyruvate (PEP) through direct phosphoryl transfer between the nucleoside triphosphate and OAA (PubMed:19807880).</text>
</comment>
<comment type="catalytic activity">
    <reaction evidence="6">
        <text>oxaloacetate + ATP = phosphoenolpyruvate + ADP + CO2</text>
        <dbReference type="Rhea" id="RHEA:18617"/>
        <dbReference type="ChEBI" id="CHEBI:16452"/>
        <dbReference type="ChEBI" id="CHEBI:16526"/>
        <dbReference type="ChEBI" id="CHEBI:30616"/>
        <dbReference type="ChEBI" id="CHEBI:58702"/>
        <dbReference type="ChEBI" id="CHEBI:456216"/>
        <dbReference type="EC" id="4.1.1.49"/>
    </reaction>
</comment>
<comment type="cofactor">
    <cofactor evidence="1">
        <name>Mn(2+)</name>
        <dbReference type="ChEBI" id="CHEBI:29035"/>
    </cofactor>
    <text evidence="1">Binds 1 Mn(2+) ion per subunit.</text>
</comment>
<comment type="activity regulation">
    <text evidence="1">Allosterically activated by calcium. It may represent the only case of a monomeric, allosteric enzyme.</text>
</comment>
<comment type="pathway">
    <text evidence="1">Carbohydrate biosynthesis; gluconeogenesis.</text>
</comment>
<comment type="subunit">
    <text evidence="1">Monomer.</text>
</comment>
<comment type="subcellular location">
    <subcellularLocation>
        <location evidence="6">Cytoplasm</location>
    </subcellularLocation>
</comment>
<comment type="tissue specificity">
    <text evidence="5 6">Expressed in cotyledons, flowers, siliques, seeds, leaves, stems and roots (PubMed:17283014). Localized in mid-veins (PubMed:19807880).</text>
</comment>
<comment type="developmental stage">
    <text evidence="5 6">Accumulates transiently in germinating seeds (at protein level) with a constant transcript level (PubMed:17283014). Abundant in cotyledons (mostly in senescing cotyledons) during post-germinative growth and in sink tissues, such as young leaves, developing flowers, siliques and seeds (at protein level) (PubMed:17283014, PubMed:19807880). In flowers, present in the nectaries, stigma, endocarp of the fruit wall and in tissues involved in the transfer of assimilates to the developing ovules and seeds, such as the vasculature and seed coat (at protein level) (PubMed:17283014).</text>
</comment>
<comment type="disruption phenotype">
    <text evidence="6">Strongly reduced phosphoenolpyruvate carboxykinase activities in veins, leading to reduced alanine levels, which is derived from phosphoenolpyruvate (PEP) via pyruvate, but increased aspartate accumulation, derived from oxaloacetate.</text>
</comment>
<comment type="similarity">
    <text evidence="9">Belongs to the phosphoenolpyruvate carboxykinase (ATP) family.</text>
</comment>
<gene>
    <name evidence="7" type="primary">PCK1</name>
    <name evidence="10" type="ordered locus">At4g37870</name>
    <name evidence="11" type="ORF">T28I19.150</name>
</gene>
<dbReference type="EC" id="4.1.1.49" evidence="6"/>
<dbReference type="EMBL" id="AL035709">
    <property type="protein sequence ID" value="CAB38935.1"/>
    <property type="molecule type" value="Genomic_DNA"/>
</dbReference>
<dbReference type="EMBL" id="AL161592">
    <property type="protein sequence ID" value="CAB80452.1"/>
    <property type="molecule type" value="Genomic_DNA"/>
</dbReference>
<dbReference type="EMBL" id="CP002687">
    <property type="protein sequence ID" value="AEE86847.1"/>
    <property type="molecule type" value="Genomic_DNA"/>
</dbReference>
<dbReference type="EMBL" id="AF372922">
    <property type="protein sequence ID" value="AAK50062.1"/>
    <property type="molecule type" value="mRNA"/>
</dbReference>
<dbReference type="EMBL" id="AY078035">
    <property type="protein sequence ID" value="AAL77736.1"/>
    <property type="molecule type" value="mRNA"/>
</dbReference>
<dbReference type="PIR" id="T06034">
    <property type="entry name" value="T06034"/>
</dbReference>
<dbReference type="RefSeq" id="NP_195500.1">
    <property type="nucleotide sequence ID" value="NM_119948.4"/>
</dbReference>
<dbReference type="SMR" id="Q9T074"/>
<dbReference type="BioGRID" id="15224">
    <property type="interactions" value="9"/>
</dbReference>
<dbReference type="FunCoup" id="Q9T074">
    <property type="interactions" value="995"/>
</dbReference>
<dbReference type="IntAct" id="Q9T074">
    <property type="interactions" value="6"/>
</dbReference>
<dbReference type="STRING" id="3702.Q9T074"/>
<dbReference type="GlyGen" id="Q9T074">
    <property type="glycosylation" value="1 site, 1 O-linked glycan (1 site)"/>
</dbReference>
<dbReference type="iPTMnet" id="Q9T074"/>
<dbReference type="SwissPalm" id="Q9T074"/>
<dbReference type="PaxDb" id="3702-AT4G37870.1"/>
<dbReference type="ProteomicsDB" id="236712"/>
<dbReference type="EnsemblPlants" id="AT4G37870.1">
    <property type="protein sequence ID" value="AT4G37870.1"/>
    <property type="gene ID" value="AT4G37870"/>
</dbReference>
<dbReference type="GeneID" id="829943"/>
<dbReference type="Gramene" id="AT4G37870.1">
    <property type="protein sequence ID" value="AT4G37870.1"/>
    <property type="gene ID" value="AT4G37870"/>
</dbReference>
<dbReference type="KEGG" id="ath:AT4G37870"/>
<dbReference type="Araport" id="AT4G37870"/>
<dbReference type="TAIR" id="AT4G37870">
    <property type="gene designation" value="PCK1"/>
</dbReference>
<dbReference type="eggNOG" id="ENOG502QQI5">
    <property type="taxonomic scope" value="Eukaryota"/>
</dbReference>
<dbReference type="HOGENOM" id="CLU_018247_0_1_1"/>
<dbReference type="InParanoid" id="Q9T074"/>
<dbReference type="OMA" id="MRYAGEM"/>
<dbReference type="OrthoDB" id="184182at2759"/>
<dbReference type="PhylomeDB" id="Q9T074"/>
<dbReference type="BioCyc" id="ARA:AT4G37870-MONOMER"/>
<dbReference type="BioCyc" id="MetaCyc:AT4G37870-MONOMER"/>
<dbReference type="UniPathway" id="UPA00138"/>
<dbReference type="CD-CODE" id="4299E36E">
    <property type="entry name" value="Nucleolus"/>
</dbReference>
<dbReference type="PRO" id="PR:Q9T074"/>
<dbReference type="Proteomes" id="UP000006548">
    <property type="component" value="Chromosome 4"/>
</dbReference>
<dbReference type="ExpressionAtlas" id="Q9T074">
    <property type="expression patterns" value="baseline and differential"/>
</dbReference>
<dbReference type="GO" id="GO:0005737">
    <property type="term" value="C:cytoplasm"/>
    <property type="evidence" value="ECO:0000314"/>
    <property type="project" value="UniProtKB"/>
</dbReference>
<dbReference type="GO" id="GO:0005730">
    <property type="term" value="C:nucleolus"/>
    <property type="evidence" value="ECO:0007005"/>
    <property type="project" value="TAIR"/>
</dbReference>
<dbReference type="GO" id="GO:0005524">
    <property type="term" value="F:ATP binding"/>
    <property type="evidence" value="ECO:0007669"/>
    <property type="project" value="UniProtKB-KW"/>
</dbReference>
<dbReference type="GO" id="GO:0046872">
    <property type="term" value="F:metal ion binding"/>
    <property type="evidence" value="ECO:0007669"/>
    <property type="project" value="UniProtKB-KW"/>
</dbReference>
<dbReference type="GO" id="GO:0004612">
    <property type="term" value="F:phosphoenolpyruvate carboxykinase (ATP) activity"/>
    <property type="evidence" value="ECO:0000315"/>
    <property type="project" value="TAIR"/>
</dbReference>
<dbReference type="GO" id="GO:0016036">
    <property type="term" value="P:cellular response to phosphate starvation"/>
    <property type="evidence" value="ECO:0000270"/>
    <property type="project" value="TAIR"/>
</dbReference>
<dbReference type="GO" id="GO:0050832">
    <property type="term" value="P:defense response to fungus"/>
    <property type="evidence" value="ECO:0000314"/>
    <property type="project" value="TAIR"/>
</dbReference>
<dbReference type="GO" id="GO:0006094">
    <property type="term" value="P:gluconeogenesis"/>
    <property type="evidence" value="ECO:0007669"/>
    <property type="project" value="UniProtKB-UniPathway"/>
</dbReference>
<dbReference type="CDD" id="cd00484">
    <property type="entry name" value="PEPCK_ATP"/>
    <property type="match status" value="1"/>
</dbReference>
<dbReference type="FunFam" id="2.170.8.10:FF:000001">
    <property type="entry name" value="Phosphoenolpyruvate carboxykinase (ATP)"/>
    <property type="match status" value="1"/>
</dbReference>
<dbReference type="FunFam" id="3.40.449.10:FF:000009">
    <property type="entry name" value="Uncharacterized protein"/>
    <property type="match status" value="1"/>
</dbReference>
<dbReference type="Gene3D" id="3.90.228.20">
    <property type="match status" value="1"/>
</dbReference>
<dbReference type="Gene3D" id="3.40.449.10">
    <property type="entry name" value="Phosphoenolpyruvate Carboxykinase, domain 1"/>
    <property type="match status" value="1"/>
</dbReference>
<dbReference type="Gene3D" id="2.170.8.10">
    <property type="entry name" value="Phosphoenolpyruvate Carboxykinase, domain 2"/>
    <property type="match status" value="1"/>
</dbReference>
<dbReference type="HAMAP" id="MF_00453">
    <property type="entry name" value="PEPCK_ATP"/>
    <property type="match status" value="1"/>
</dbReference>
<dbReference type="InterPro" id="IPR001272">
    <property type="entry name" value="PEP_carboxykinase_ATP"/>
</dbReference>
<dbReference type="InterPro" id="IPR013035">
    <property type="entry name" value="PEP_carboxykinase_C"/>
</dbReference>
<dbReference type="InterPro" id="IPR008210">
    <property type="entry name" value="PEP_carboxykinase_N"/>
</dbReference>
<dbReference type="InterPro" id="IPR015994">
    <property type="entry name" value="PEPCK_ATP_CS"/>
</dbReference>
<dbReference type="NCBIfam" id="TIGR00224">
    <property type="entry name" value="pckA"/>
    <property type="match status" value="1"/>
</dbReference>
<dbReference type="NCBIfam" id="NF006820">
    <property type="entry name" value="PRK09344.1-2"/>
    <property type="match status" value="1"/>
</dbReference>
<dbReference type="NCBIfam" id="NF006821">
    <property type="entry name" value="PRK09344.1-3"/>
    <property type="match status" value="1"/>
</dbReference>
<dbReference type="PANTHER" id="PTHR30031:SF0">
    <property type="entry name" value="PHOSPHOENOLPYRUVATE CARBOXYKINASE (ATP)"/>
    <property type="match status" value="1"/>
</dbReference>
<dbReference type="PANTHER" id="PTHR30031">
    <property type="entry name" value="PHOSPHOENOLPYRUVATE CARBOXYKINASE ATP"/>
    <property type="match status" value="1"/>
</dbReference>
<dbReference type="Pfam" id="PF01293">
    <property type="entry name" value="PEPCK_ATP"/>
    <property type="match status" value="1"/>
</dbReference>
<dbReference type="SUPFAM" id="SSF68923">
    <property type="entry name" value="PEP carboxykinase N-terminal domain"/>
    <property type="match status" value="1"/>
</dbReference>
<dbReference type="SUPFAM" id="SSF53795">
    <property type="entry name" value="PEP carboxykinase-like"/>
    <property type="match status" value="1"/>
</dbReference>
<dbReference type="PROSITE" id="PS00532">
    <property type="entry name" value="PEPCK_ATP"/>
    <property type="match status" value="1"/>
</dbReference>
<feature type="initiator methionine" description="Removed" evidence="14">
    <location>
        <position position="1"/>
    </location>
</feature>
<feature type="chain" id="PRO_0000203862" description="Phosphoenolpyruvate carboxykinase (ATP) 1">
    <location>
        <begin position="2"/>
        <end position="671"/>
    </location>
</feature>
<feature type="region of interest" description="Disordered" evidence="4">
    <location>
        <begin position="1"/>
        <end position="44"/>
    </location>
</feature>
<feature type="region of interest" description="Disordered" evidence="4">
    <location>
        <begin position="100"/>
        <end position="127"/>
    </location>
</feature>
<feature type="compositionally biased region" description="Low complexity" evidence="4">
    <location>
        <begin position="1"/>
        <end position="10"/>
    </location>
</feature>
<feature type="compositionally biased region" description="Basic and acidic residues" evidence="4">
    <location>
        <begin position="108"/>
        <end position="118"/>
    </location>
</feature>
<feature type="binding site" evidence="1">
    <location>
        <position position="189"/>
    </location>
    <ligand>
        <name>substrate</name>
    </ligand>
</feature>
<feature type="binding site" evidence="2">
    <location>
        <position position="270"/>
    </location>
    <ligand>
        <name>Ca(2+)</name>
        <dbReference type="ChEBI" id="CHEBI:29108"/>
    </ligand>
</feature>
<feature type="binding site" evidence="2">
    <location>
        <position position="271"/>
    </location>
    <ligand>
        <name>Ca(2+)</name>
        <dbReference type="ChEBI" id="CHEBI:29108"/>
    </ligand>
</feature>
<feature type="binding site" evidence="1">
    <location>
        <position position="328"/>
    </location>
    <ligand>
        <name>substrate</name>
    </ligand>
</feature>
<feature type="binding site" evidence="2">
    <location>
        <position position="334"/>
    </location>
    <ligand>
        <name>ATP</name>
        <dbReference type="ChEBI" id="CHEBI:30616"/>
    </ligand>
</feature>
<feature type="binding site" evidence="1">
    <location>
        <position position="334"/>
    </location>
    <ligand>
        <name>Mn(2+)</name>
        <dbReference type="ChEBI" id="CHEBI:29035"/>
    </ligand>
</feature>
<feature type="binding site" evidence="1">
    <location>
        <position position="334"/>
    </location>
    <ligand>
        <name>substrate</name>
    </ligand>
</feature>
<feature type="binding site" evidence="2">
    <location>
        <position position="353"/>
    </location>
    <ligand>
        <name>ATP</name>
        <dbReference type="ChEBI" id="CHEBI:30616"/>
    </ligand>
</feature>
<feature type="binding site" evidence="1">
    <location>
        <position position="353"/>
    </location>
    <ligand>
        <name>Mn(2+)</name>
        <dbReference type="ChEBI" id="CHEBI:29035"/>
    </ligand>
</feature>
<feature type="binding site" evidence="1 3">
    <location>
        <begin position="369"/>
        <end position="377"/>
    </location>
    <ligand>
        <name>ATP</name>
        <dbReference type="ChEBI" id="CHEBI:30616"/>
    </ligand>
</feature>
<feature type="binding site" evidence="1">
    <location>
        <position position="390"/>
    </location>
    <ligand>
        <name>Mn(2+)</name>
        <dbReference type="ChEBI" id="CHEBI:29035"/>
    </ligand>
</feature>
<feature type="binding site" evidence="2">
    <location>
        <position position="404"/>
    </location>
    <ligand>
        <name>Ca(2+)</name>
        <dbReference type="ChEBI" id="CHEBI:29108"/>
    </ligand>
</feature>
<feature type="binding site" evidence="1">
    <location>
        <position position="418"/>
    </location>
    <ligand>
        <name>ATP</name>
        <dbReference type="ChEBI" id="CHEBI:30616"/>
    </ligand>
</feature>
<feature type="binding site" evidence="2">
    <location>
        <position position="455"/>
    </location>
    <ligand>
        <name>ATP</name>
        <dbReference type="ChEBI" id="CHEBI:30616"/>
    </ligand>
</feature>
<feature type="binding site" evidence="1">
    <location>
        <position position="455"/>
    </location>
    <ligand>
        <name>substrate</name>
    </ligand>
</feature>
<feature type="binding site" evidence="1">
    <location>
        <begin position="574"/>
        <end position="575"/>
    </location>
    <ligand>
        <name>ATP</name>
        <dbReference type="ChEBI" id="CHEBI:30616"/>
    </ligand>
</feature>
<feature type="binding site" evidence="2">
    <location>
        <position position="575"/>
    </location>
    <ligand>
        <name>ATP</name>
        <dbReference type="ChEBI" id="CHEBI:30616"/>
    </ligand>
</feature>
<feature type="binding site" evidence="2">
    <location>
        <position position="580"/>
    </location>
    <ligand>
        <name>ATP</name>
        <dbReference type="ChEBI" id="CHEBI:30616"/>
    </ligand>
</feature>
<feature type="modified residue" description="N-acetylserine" evidence="14">
    <location>
        <position position="2"/>
    </location>
</feature>
<feature type="modified residue" description="Phosphoserine" evidence="12 13">
    <location>
        <position position="62"/>
    </location>
</feature>
<feature type="modified residue" description="Phosphothreonine" evidence="12">
    <location>
        <position position="66"/>
    </location>
</feature>
<protein>
    <recommendedName>
        <fullName evidence="7">Phosphoenolpyruvate carboxykinase (ATP) 1</fullName>
        <shortName evidence="8">AtPCK1</shortName>
        <shortName evidence="7">PEP carboxykinase 1</shortName>
        <shortName evidence="7">PEPCK 1</shortName>
        <ecNumber evidence="6">4.1.1.49</ecNumber>
    </recommendedName>
</protein>
<proteinExistence type="evidence at protein level"/>
<sequence length="671" mass="73405">MSAGNGNATNGDGGFSFPKGPVMPKITTGAAKRGSGVCHDDSGPTVNATTIDELHSLQKKRSAPTTPINQNAAAAFAAVSEEERQKIQLQSISASLASLTRESGPKVVRGDPAEKKTDGSTTPAYAHGQHHSIFSPATGAVSDSSLKFTHVLYNLSPAELYEQAIKYEKGSFITSNGALATLSGAKTGRAPRDKRVVRDATTEDELWWGKGSPNIEMDEHTFMVNRERAVDYLNSLEKVFVNDQYLNWDPENRIKVRIVSARAYHSLFMHNMCIRPTQEELESFGTPDFTIYNAGQFPCNRYTHYMTSSTSVDLNLARREMVILGTQYAGEMKKGLFSVMHYLMPKRRILSLHSGCNMGKDGDVALFFGLSGTGKTTLSTDHNRYLIGDDEHCWTETGVSNIEGGCYAKCVDLSREKEPDIWNAIKFGTVLENVVFDEHTREVDYSDKSVTENTRAAYPIEFIPNAKIPCVGPHPTNVILLACDAFGVLPPVSKLNLAQTMYHFISGYTALVAGTEDGIKEPTATFSACFGAAFIMLHPTKYAAMLAEKMKSQGATGWLVNTGWSGGSYGVGNRIKLAYTRKIIDAIHSGSLLKANYKKTEIFGFEIPTEIEGIPSEILDPVNSWSDKKAHKDTLVKLGGLFKKNFEVFANHKIGVDGKLTEEILAAGPIF</sequence>